<accession>A0LSX9</accession>
<name>UPPP_ACIC1</name>
<gene>
    <name evidence="1" type="primary">uppP</name>
    <name type="ordered locus">Acel_0766</name>
</gene>
<protein>
    <recommendedName>
        <fullName evidence="1">Undecaprenyl-diphosphatase</fullName>
        <ecNumber evidence="1">3.6.1.27</ecNumber>
    </recommendedName>
    <alternativeName>
        <fullName evidence="1">Bacitracin resistance protein</fullName>
    </alternativeName>
    <alternativeName>
        <fullName evidence="1">Undecaprenyl pyrophosphate phosphatase</fullName>
    </alternativeName>
</protein>
<organism>
    <name type="scientific">Acidothermus cellulolyticus (strain ATCC 43068 / DSM 8971 / 11B)</name>
    <dbReference type="NCBI Taxonomy" id="351607"/>
    <lineage>
        <taxon>Bacteria</taxon>
        <taxon>Bacillati</taxon>
        <taxon>Actinomycetota</taxon>
        <taxon>Actinomycetes</taxon>
        <taxon>Acidothermales</taxon>
        <taxon>Acidothermaceae</taxon>
        <taxon>Acidothermus</taxon>
    </lineage>
</organism>
<comment type="function">
    <text evidence="1">Catalyzes the dephosphorylation of undecaprenyl diphosphate (UPP). Confers resistance to bacitracin.</text>
</comment>
<comment type="catalytic activity">
    <reaction evidence="1">
        <text>di-trans,octa-cis-undecaprenyl diphosphate + H2O = di-trans,octa-cis-undecaprenyl phosphate + phosphate + H(+)</text>
        <dbReference type="Rhea" id="RHEA:28094"/>
        <dbReference type="ChEBI" id="CHEBI:15377"/>
        <dbReference type="ChEBI" id="CHEBI:15378"/>
        <dbReference type="ChEBI" id="CHEBI:43474"/>
        <dbReference type="ChEBI" id="CHEBI:58405"/>
        <dbReference type="ChEBI" id="CHEBI:60392"/>
        <dbReference type="EC" id="3.6.1.27"/>
    </reaction>
</comment>
<comment type="subcellular location">
    <subcellularLocation>
        <location evidence="1">Cell membrane</location>
        <topology evidence="1">Multi-pass membrane protein</topology>
    </subcellularLocation>
</comment>
<comment type="miscellaneous">
    <text>Bacitracin is thought to be involved in the inhibition of peptidoglycan synthesis by sequestering undecaprenyl diphosphate, thereby reducing the pool of lipid carrier available.</text>
</comment>
<comment type="similarity">
    <text evidence="1">Belongs to the UppP family.</text>
</comment>
<dbReference type="EC" id="3.6.1.27" evidence="1"/>
<dbReference type="EMBL" id="CP000481">
    <property type="protein sequence ID" value="ABK52539.1"/>
    <property type="molecule type" value="Genomic_DNA"/>
</dbReference>
<dbReference type="RefSeq" id="WP_011719602.1">
    <property type="nucleotide sequence ID" value="NC_008578.1"/>
</dbReference>
<dbReference type="SMR" id="A0LSX9"/>
<dbReference type="FunCoup" id="A0LSX9">
    <property type="interactions" value="6"/>
</dbReference>
<dbReference type="STRING" id="351607.Acel_0766"/>
<dbReference type="KEGG" id="ace:Acel_0766"/>
<dbReference type="eggNOG" id="COG1968">
    <property type="taxonomic scope" value="Bacteria"/>
</dbReference>
<dbReference type="HOGENOM" id="CLU_060296_1_0_11"/>
<dbReference type="InParanoid" id="A0LSX9"/>
<dbReference type="OrthoDB" id="9808289at2"/>
<dbReference type="Proteomes" id="UP000008221">
    <property type="component" value="Chromosome"/>
</dbReference>
<dbReference type="GO" id="GO:0005886">
    <property type="term" value="C:plasma membrane"/>
    <property type="evidence" value="ECO:0007669"/>
    <property type="project" value="UniProtKB-SubCell"/>
</dbReference>
<dbReference type="GO" id="GO:0050380">
    <property type="term" value="F:undecaprenyl-diphosphatase activity"/>
    <property type="evidence" value="ECO:0007669"/>
    <property type="project" value="UniProtKB-UniRule"/>
</dbReference>
<dbReference type="GO" id="GO:0071555">
    <property type="term" value="P:cell wall organization"/>
    <property type="evidence" value="ECO:0007669"/>
    <property type="project" value="UniProtKB-KW"/>
</dbReference>
<dbReference type="GO" id="GO:0009252">
    <property type="term" value="P:peptidoglycan biosynthetic process"/>
    <property type="evidence" value="ECO:0007669"/>
    <property type="project" value="UniProtKB-KW"/>
</dbReference>
<dbReference type="GO" id="GO:0008360">
    <property type="term" value="P:regulation of cell shape"/>
    <property type="evidence" value="ECO:0007669"/>
    <property type="project" value="UniProtKB-KW"/>
</dbReference>
<dbReference type="GO" id="GO:0046677">
    <property type="term" value="P:response to antibiotic"/>
    <property type="evidence" value="ECO:0007669"/>
    <property type="project" value="UniProtKB-UniRule"/>
</dbReference>
<dbReference type="HAMAP" id="MF_01006">
    <property type="entry name" value="Undec_diphosphatase"/>
    <property type="match status" value="1"/>
</dbReference>
<dbReference type="InterPro" id="IPR003824">
    <property type="entry name" value="UppP"/>
</dbReference>
<dbReference type="NCBIfam" id="NF001392">
    <property type="entry name" value="PRK00281.2-1"/>
    <property type="match status" value="1"/>
</dbReference>
<dbReference type="NCBIfam" id="TIGR00753">
    <property type="entry name" value="undec_PP_bacA"/>
    <property type="match status" value="1"/>
</dbReference>
<dbReference type="PANTHER" id="PTHR30622">
    <property type="entry name" value="UNDECAPRENYL-DIPHOSPHATASE"/>
    <property type="match status" value="1"/>
</dbReference>
<dbReference type="PANTHER" id="PTHR30622:SF3">
    <property type="entry name" value="UNDECAPRENYL-DIPHOSPHATASE"/>
    <property type="match status" value="1"/>
</dbReference>
<dbReference type="Pfam" id="PF02673">
    <property type="entry name" value="BacA"/>
    <property type="match status" value="1"/>
</dbReference>
<keyword id="KW-0046">Antibiotic resistance</keyword>
<keyword id="KW-1003">Cell membrane</keyword>
<keyword id="KW-0133">Cell shape</keyword>
<keyword id="KW-0961">Cell wall biogenesis/degradation</keyword>
<keyword id="KW-0378">Hydrolase</keyword>
<keyword id="KW-0472">Membrane</keyword>
<keyword id="KW-0573">Peptidoglycan synthesis</keyword>
<keyword id="KW-1185">Reference proteome</keyword>
<keyword id="KW-0812">Transmembrane</keyword>
<keyword id="KW-1133">Transmembrane helix</keyword>
<sequence length="276" mass="29501">MNGVSAVVLGVIEGVTEFLPVSSTAHLTIAEALMGMKTDAPAVTAFTAVIQMGAILAAIVYFRRDIRTVVTAWFRGLVRADERRSPDALLGWYVIAGTIPIGLAGYLGRNVIKHDLRSLWYVVAGLVLWSIAIVYAERTAAQRRDLRDMRLPDAVFIGVIQVLALVPGVSRSGATISAGLRQGFDRVAATRFSFLLAIPALLAAGIFELKDAVGTSGVSMASLVVGTGMAFLTAYASIAWLLRFVAHHSLTNFVWYRVTVAVFVVAALTTGLVHAV</sequence>
<reference key="1">
    <citation type="journal article" date="2009" name="Genome Res.">
        <title>Complete genome of the cellulolytic thermophile Acidothermus cellulolyticus 11B provides insights into its ecophysiological and evolutionary adaptations.</title>
        <authorList>
            <person name="Barabote R.D."/>
            <person name="Xie G."/>
            <person name="Leu D.H."/>
            <person name="Normand P."/>
            <person name="Necsulea A."/>
            <person name="Daubin V."/>
            <person name="Medigue C."/>
            <person name="Adney W.S."/>
            <person name="Xu X.C."/>
            <person name="Lapidus A."/>
            <person name="Parales R.E."/>
            <person name="Detter C."/>
            <person name="Pujic P."/>
            <person name="Bruce D."/>
            <person name="Lavire C."/>
            <person name="Challacombe J.F."/>
            <person name="Brettin T.S."/>
            <person name="Berry A.M."/>
        </authorList>
    </citation>
    <scope>NUCLEOTIDE SEQUENCE [LARGE SCALE GENOMIC DNA]</scope>
    <source>
        <strain>ATCC 43068 / DSM 8971 / 11B</strain>
    </source>
</reference>
<feature type="chain" id="PRO_0000290675" description="Undecaprenyl-diphosphatase">
    <location>
        <begin position="1"/>
        <end position="276"/>
    </location>
</feature>
<feature type="transmembrane region" description="Helical" evidence="1">
    <location>
        <begin position="42"/>
        <end position="62"/>
    </location>
</feature>
<feature type="transmembrane region" description="Helical" evidence="1">
    <location>
        <begin position="88"/>
        <end position="108"/>
    </location>
</feature>
<feature type="transmembrane region" description="Helical" evidence="1">
    <location>
        <begin position="116"/>
        <end position="136"/>
    </location>
</feature>
<feature type="transmembrane region" description="Helical" evidence="1">
    <location>
        <begin position="149"/>
        <end position="169"/>
    </location>
</feature>
<feature type="transmembrane region" description="Helical" evidence="1">
    <location>
        <begin position="187"/>
        <end position="207"/>
    </location>
</feature>
<feature type="transmembrane region" description="Helical" evidence="1">
    <location>
        <begin position="222"/>
        <end position="242"/>
    </location>
</feature>
<feature type="transmembrane region" description="Helical" evidence="1">
    <location>
        <begin position="253"/>
        <end position="273"/>
    </location>
</feature>
<proteinExistence type="inferred from homology"/>
<evidence type="ECO:0000255" key="1">
    <source>
        <dbReference type="HAMAP-Rule" id="MF_01006"/>
    </source>
</evidence>